<evidence type="ECO:0000250" key="1">
    <source>
        <dbReference type="UniProtKB" id="O43719"/>
    </source>
</evidence>
<evidence type="ECO:0000255" key="2">
    <source>
        <dbReference type="PROSITE-ProRule" id="PRU00176"/>
    </source>
</evidence>
<evidence type="ECO:0000256" key="3">
    <source>
        <dbReference type="SAM" id="MobiDB-lite"/>
    </source>
</evidence>
<evidence type="ECO:0000303" key="4">
    <source>
    </source>
</evidence>
<evidence type="ECO:0000305" key="5"/>
<evidence type="ECO:0007744" key="6">
    <source>
    </source>
</evidence>
<evidence type="ECO:0007744" key="7">
    <source>
    </source>
</evidence>
<evidence type="ECO:0007744" key="8">
    <source>
    </source>
</evidence>
<evidence type="ECO:0007744" key="9">
    <source>
    </source>
</evidence>
<gene>
    <name type="primary">Htatsf1</name>
</gene>
<dbReference type="EMBL" id="AK005527">
    <property type="protein sequence ID" value="BAB24100.1"/>
    <property type="molecule type" value="mRNA"/>
</dbReference>
<dbReference type="EMBL" id="AK011234">
    <property type="protein sequence ID" value="BAB27483.1"/>
    <property type="molecule type" value="mRNA"/>
</dbReference>
<dbReference type="EMBL" id="AK049495">
    <property type="protein sequence ID" value="BAC33777.1"/>
    <property type="molecule type" value="mRNA"/>
</dbReference>
<dbReference type="EMBL" id="AL672263">
    <property type="status" value="NOT_ANNOTATED_CDS"/>
    <property type="molecule type" value="Genomic_DNA"/>
</dbReference>
<dbReference type="EMBL" id="BC037711">
    <property type="protein sequence ID" value="AAH37711.1"/>
    <property type="molecule type" value="mRNA"/>
</dbReference>
<dbReference type="EMBL" id="BC114588">
    <property type="protein sequence ID" value="AAI14589.1"/>
    <property type="status" value="ALT_INIT"/>
    <property type="molecule type" value="mRNA"/>
</dbReference>
<dbReference type="EMBL" id="BC114589">
    <property type="protein sequence ID" value="AAI14590.1"/>
    <property type="status" value="ALT_INIT"/>
    <property type="molecule type" value="mRNA"/>
</dbReference>
<dbReference type="CCDS" id="CCDS40983.1">
    <molecule id="Q8BGC0-1"/>
</dbReference>
<dbReference type="RefSeq" id="NP_082518.1">
    <molecule id="Q8BGC0-1"/>
    <property type="nucleotide sequence ID" value="NM_028242.2"/>
</dbReference>
<dbReference type="RefSeq" id="NP_083647.1">
    <molecule id="Q8BGC0-1"/>
    <property type="nucleotide sequence ID" value="NM_029371.1"/>
</dbReference>
<dbReference type="SMR" id="Q8BGC0"/>
<dbReference type="BioGRID" id="215380">
    <property type="interactions" value="68"/>
</dbReference>
<dbReference type="DIP" id="DIP-46367N"/>
<dbReference type="FunCoup" id="Q8BGC0">
    <property type="interactions" value="1966"/>
</dbReference>
<dbReference type="IntAct" id="Q8BGC0">
    <property type="interactions" value="2"/>
</dbReference>
<dbReference type="STRING" id="10090.ENSMUSP00000086027"/>
<dbReference type="GlyGen" id="Q8BGC0">
    <property type="glycosylation" value="1 site, 1 O-linked glycan (1 site)"/>
</dbReference>
<dbReference type="iPTMnet" id="Q8BGC0"/>
<dbReference type="PhosphoSitePlus" id="Q8BGC0"/>
<dbReference type="SwissPalm" id="Q8BGC0"/>
<dbReference type="jPOST" id="Q8BGC0"/>
<dbReference type="PaxDb" id="10090-ENSMUSP00000086027"/>
<dbReference type="PeptideAtlas" id="Q8BGC0"/>
<dbReference type="ProteomicsDB" id="273284">
    <molecule id="Q8BGC0-1"/>
</dbReference>
<dbReference type="ProteomicsDB" id="273285">
    <molecule id="Q8BGC0-2"/>
</dbReference>
<dbReference type="Pumba" id="Q8BGC0"/>
<dbReference type="Antibodypedia" id="375">
    <property type="antibodies" value="273 antibodies from 34 providers"/>
</dbReference>
<dbReference type="DNASU" id="72459"/>
<dbReference type="Ensembl" id="ENSMUST00000088652.6">
    <molecule id="Q8BGC0-1"/>
    <property type="protein sequence ID" value="ENSMUSP00000086027.6"/>
    <property type="gene ID" value="ENSMUSG00000067873.12"/>
</dbReference>
<dbReference type="Ensembl" id="ENSMUST00000114751.9">
    <molecule id="Q8BGC0-2"/>
    <property type="protein sequence ID" value="ENSMUSP00000110399.3"/>
    <property type="gene ID" value="ENSMUSG00000067873.12"/>
</dbReference>
<dbReference type="GeneID" id="72459"/>
<dbReference type="KEGG" id="mmu:72459"/>
<dbReference type="UCSC" id="uc009tgv.2">
    <molecule id="Q8BGC0-2"/>
    <property type="organism name" value="mouse"/>
</dbReference>
<dbReference type="UCSC" id="uc009tgw.2">
    <molecule id="Q8BGC0-1"/>
    <property type="organism name" value="mouse"/>
</dbReference>
<dbReference type="AGR" id="MGI:1919709"/>
<dbReference type="CTD" id="27336"/>
<dbReference type="MGI" id="MGI:1919709">
    <property type="gene designation" value="Htatsf1"/>
</dbReference>
<dbReference type="VEuPathDB" id="HostDB:ENSMUSG00000067873"/>
<dbReference type="eggNOG" id="KOG1548">
    <property type="taxonomic scope" value="Eukaryota"/>
</dbReference>
<dbReference type="GeneTree" id="ENSGT00390000009902"/>
<dbReference type="HOGENOM" id="CLU_026945_4_0_1"/>
<dbReference type="InParanoid" id="Q8BGC0"/>
<dbReference type="OMA" id="CAKFGQI"/>
<dbReference type="OrthoDB" id="10258585at2759"/>
<dbReference type="PhylomeDB" id="Q8BGC0"/>
<dbReference type="TreeFam" id="TF313623"/>
<dbReference type="Reactome" id="R-MMU-72163">
    <property type="pathway name" value="mRNA Splicing - Major Pathway"/>
</dbReference>
<dbReference type="BioGRID-ORCS" id="72459">
    <property type="hits" value="23 hits in 81 CRISPR screens"/>
</dbReference>
<dbReference type="ChiTaRS" id="Htatsf1">
    <property type="organism name" value="mouse"/>
</dbReference>
<dbReference type="PRO" id="PR:Q8BGC0"/>
<dbReference type="Proteomes" id="UP000000589">
    <property type="component" value="Chromosome X"/>
</dbReference>
<dbReference type="RNAct" id="Q8BGC0">
    <property type="molecule type" value="protein"/>
</dbReference>
<dbReference type="Bgee" id="ENSMUSG00000067873">
    <property type="expression patterns" value="Expressed in pituitary gland and 263 other cell types or tissues"/>
</dbReference>
<dbReference type="GO" id="GO:0005654">
    <property type="term" value="C:nucleoplasm"/>
    <property type="evidence" value="ECO:0007669"/>
    <property type="project" value="Ensembl"/>
</dbReference>
<dbReference type="GO" id="GO:0035861">
    <property type="term" value="C:site of double-strand break"/>
    <property type="evidence" value="ECO:0000250"/>
    <property type="project" value="UniProtKB"/>
</dbReference>
<dbReference type="GO" id="GO:0005684">
    <property type="term" value="C:U2-type spliceosomal complex"/>
    <property type="evidence" value="ECO:0000250"/>
    <property type="project" value="UniProtKB"/>
</dbReference>
<dbReference type="GO" id="GO:0140463">
    <property type="term" value="F:chromatin-protein adaptor activity"/>
    <property type="evidence" value="ECO:0000250"/>
    <property type="project" value="UniProtKB"/>
</dbReference>
<dbReference type="GO" id="GO:0160004">
    <property type="term" value="F:poly-ADP-D-ribose modification-dependent protein binding"/>
    <property type="evidence" value="ECO:0000250"/>
    <property type="project" value="UniProtKB"/>
</dbReference>
<dbReference type="GO" id="GO:0003723">
    <property type="term" value="F:RNA binding"/>
    <property type="evidence" value="ECO:0007669"/>
    <property type="project" value="UniProtKB-KW"/>
</dbReference>
<dbReference type="GO" id="GO:0000724">
    <property type="term" value="P:double-strand break repair via homologous recombination"/>
    <property type="evidence" value="ECO:0000250"/>
    <property type="project" value="UniProtKB"/>
</dbReference>
<dbReference type="GO" id="GO:0000398">
    <property type="term" value="P:mRNA splicing, via spliceosome"/>
    <property type="evidence" value="ECO:0000250"/>
    <property type="project" value="UniProtKB"/>
</dbReference>
<dbReference type="GO" id="GO:1990166">
    <property type="term" value="P:protein localization to site of double-strand break"/>
    <property type="evidence" value="ECO:0000250"/>
    <property type="project" value="UniProtKB"/>
</dbReference>
<dbReference type="GO" id="GO:1903241">
    <property type="term" value="P:U2-type prespliceosome assembly"/>
    <property type="evidence" value="ECO:0000250"/>
    <property type="project" value="UniProtKB"/>
</dbReference>
<dbReference type="CDD" id="cd12281">
    <property type="entry name" value="RRM1_TatSF1_like"/>
    <property type="match status" value="1"/>
</dbReference>
<dbReference type="CDD" id="cd12282">
    <property type="entry name" value="RRM2_TatSF1_like"/>
    <property type="match status" value="1"/>
</dbReference>
<dbReference type="FunFam" id="3.30.70.330:FF:000202">
    <property type="entry name" value="HIV Tat-specific factor 1"/>
    <property type="match status" value="1"/>
</dbReference>
<dbReference type="FunFam" id="3.30.70.330:FF:000105">
    <property type="entry name" value="HIV Tat-specific factor 1 homolog"/>
    <property type="match status" value="1"/>
</dbReference>
<dbReference type="Gene3D" id="3.30.70.330">
    <property type="match status" value="2"/>
</dbReference>
<dbReference type="InterPro" id="IPR012677">
    <property type="entry name" value="Nucleotide-bd_a/b_plait_sf"/>
</dbReference>
<dbReference type="InterPro" id="IPR035979">
    <property type="entry name" value="RBD_domain_sf"/>
</dbReference>
<dbReference type="InterPro" id="IPR000504">
    <property type="entry name" value="RRM_dom"/>
</dbReference>
<dbReference type="InterPro" id="IPR003954">
    <property type="entry name" value="RRM_dom_euk"/>
</dbReference>
<dbReference type="InterPro" id="IPR034393">
    <property type="entry name" value="TatSF1-like"/>
</dbReference>
<dbReference type="InterPro" id="IPR034392">
    <property type="entry name" value="TatSF1-like_RRM1"/>
</dbReference>
<dbReference type="PANTHER" id="PTHR15608:SF0">
    <property type="entry name" value="HIV TAT-SPECIFIC FACTOR 1"/>
    <property type="match status" value="1"/>
</dbReference>
<dbReference type="PANTHER" id="PTHR15608">
    <property type="entry name" value="SPLICING FACTOR U2AF-ASSOCIATED PROTEIN 2"/>
    <property type="match status" value="1"/>
</dbReference>
<dbReference type="Pfam" id="PF00076">
    <property type="entry name" value="RRM_1"/>
    <property type="match status" value="2"/>
</dbReference>
<dbReference type="SMART" id="SM00360">
    <property type="entry name" value="RRM"/>
    <property type="match status" value="2"/>
</dbReference>
<dbReference type="SMART" id="SM00361">
    <property type="entry name" value="RRM_1"/>
    <property type="match status" value="1"/>
</dbReference>
<dbReference type="SUPFAM" id="SSF54928">
    <property type="entry name" value="RNA-binding domain, RBD"/>
    <property type="match status" value="2"/>
</dbReference>
<dbReference type="PROSITE" id="PS50102">
    <property type="entry name" value="RRM"/>
    <property type="match status" value="2"/>
</dbReference>
<reference key="1">
    <citation type="journal article" date="2005" name="Science">
        <title>The transcriptional landscape of the mammalian genome.</title>
        <authorList>
            <person name="Carninci P."/>
            <person name="Kasukawa T."/>
            <person name="Katayama S."/>
            <person name="Gough J."/>
            <person name="Frith M.C."/>
            <person name="Maeda N."/>
            <person name="Oyama R."/>
            <person name="Ravasi T."/>
            <person name="Lenhard B."/>
            <person name="Wells C."/>
            <person name="Kodzius R."/>
            <person name="Shimokawa K."/>
            <person name="Bajic V.B."/>
            <person name="Brenner S.E."/>
            <person name="Batalov S."/>
            <person name="Forrest A.R."/>
            <person name="Zavolan M."/>
            <person name="Davis M.J."/>
            <person name="Wilming L.G."/>
            <person name="Aidinis V."/>
            <person name="Allen J.E."/>
            <person name="Ambesi-Impiombato A."/>
            <person name="Apweiler R."/>
            <person name="Aturaliya R.N."/>
            <person name="Bailey T.L."/>
            <person name="Bansal M."/>
            <person name="Baxter L."/>
            <person name="Beisel K.W."/>
            <person name="Bersano T."/>
            <person name="Bono H."/>
            <person name="Chalk A.M."/>
            <person name="Chiu K.P."/>
            <person name="Choudhary V."/>
            <person name="Christoffels A."/>
            <person name="Clutterbuck D.R."/>
            <person name="Crowe M.L."/>
            <person name="Dalla E."/>
            <person name="Dalrymple B.P."/>
            <person name="de Bono B."/>
            <person name="Della Gatta G."/>
            <person name="di Bernardo D."/>
            <person name="Down T."/>
            <person name="Engstrom P."/>
            <person name="Fagiolini M."/>
            <person name="Faulkner G."/>
            <person name="Fletcher C.F."/>
            <person name="Fukushima T."/>
            <person name="Furuno M."/>
            <person name="Futaki S."/>
            <person name="Gariboldi M."/>
            <person name="Georgii-Hemming P."/>
            <person name="Gingeras T.R."/>
            <person name="Gojobori T."/>
            <person name="Green R.E."/>
            <person name="Gustincich S."/>
            <person name="Harbers M."/>
            <person name="Hayashi Y."/>
            <person name="Hensch T.K."/>
            <person name="Hirokawa N."/>
            <person name="Hill D."/>
            <person name="Huminiecki L."/>
            <person name="Iacono M."/>
            <person name="Ikeo K."/>
            <person name="Iwama A."/>
            <person name="Ishikawa T."/>
            <person name="Jakt M."/>
            <person name="Kanapin A."/>
            <person name="Katoh M."/>
            <person name="Kawasawa Y."/>
            <person name="Kelso J."/>
            <person name="Kitamura H."/>
            <person name="Kitano H."/>
            <person name="Kollias G."/>
            <person name="Krishnan S.P."/>
            <person name="Kruger A."/>
            <person name="Kummerfeld S.K."/>
            <person name="Kurochkin I.V."/>
            <person name="Lareau L.F."/>
            <person name="Lazarevic D."/>
            <person name="Lipovich L."/>
            <person name="Liu J."/>
            <person name="Liuni S."/>
            <person name="McWilliam S."/>
            <person name="Madan Babu M."/>
            <person name="Madera M."/>
            <person name="Marchionni L."/>
            <person name="Matsuda H."/>
            <person name="Matsuzawa S."/>
            <person name="Miki H."/>
            <person name="Mignone F."/>
            <person name="Miyake S."/>
            <person name="Morris K."/>
            <person name="Mottagui-Tabar S."/>
            <person name="Mulder N."/>
            <person name="Nakano N."/>
            <person name="Nakauchi H."/>
            <person name="Ng P."/>
            <person name="Nilsson R."/>
            <person name="Nishiguchi S."/>
            <person name="Nishikawa S."/>
            <person name="Nori F."/>
            <person name="Ohara O."/>
            <person name="Okazaki Y."/>
            <person name="Orlando V."/>
            <person name="Pang K.C."/>
            <person name="Pavan W.J."/>
            <person name="Pavesi G."/>
            <person name="Pesole G."/>
            <person name="Petrovsky N."/>
            <person name="Piazza S."/>
            <person name="Reed J."/>
            <person name="Reid J.F."/>
            <person name="Ring B.Z."/>
            <person name="Ringwald M."/>
            <person name="Rost B."/>
            <person name="Ruan Y."/>
            <person name="Salzberg S.L."/>
            <person name="Sandelin A."/>
            <person name="Schneider C."/>
            <person name="Schoenbach C."/>
            <person name="Sekiguchi K."/>
            <person name="Semple C.A."/>
            <person name="Seno S."/>
            <person name="Sessa L."/>
            <person name="Sheng Y."/>
            <person name="Shibata Y."/>
            <person name="Shimada H."/>
            <person name="Shimada K."/>
            <person name="Silva D."/>
            <person name="Sinclair B."/>
            <person name="Sperling S."/>
            <person name="Stupka E."/>
            <person name="Sugiura K."/>
            <person name="Sultana R."/>
            <person name="Takenaka Y."/>
            <person name="Taki K."/>
            <person name="Tammoja K."/>
            <person name="Tan S.L."/>
            <person name="Tang S."/>
            <person name="Taylor M.S."/>
            <person name="Tegner J."/>
            <person name="Teichmann S.A."/>
            <person name="Ueda H.R."/>
            <person name="van Nimwegen E."/>
            <person name="Verardo R."/>
            <person name="Wei C.L."/>
            <person name="Yagi K."/>
            <person name="Yamanishi H."/>
            <person name="Zabarovsky E."/>
            <person name="Zhu S."/>
            <person name="Zimmer A."/>
            <person name="Hide W."/>
            <person name="Bult C."/>
            <person name="Grimmond S.M."/>
            <person name="Teasdale R.D."/>
            <person name="Liu E.T."/>
            <person name="Brusic V."/>
            <person name="Quackenbush J."/>
            <person name="Wahlestedt C."/>
            <person name="Mattick J.S."/>
            <person name="Hume D.A."/>
            <person name="Kai C."/>
            <person name="Sasaki D."/>
            <person name="Tomaru Y."/>
            <person name="Fukuda S."/>
            <person name="Kanamori-Katayama M."/>
            <person name="Suzuki M."/>
            <person name="Aoki J."/>
            <person name="Arakawa T."/>
            <person name="Iida J."/>
            <person name="Imamura K."/>
            <person name="Itoh M."/>
            <person name="Kato T."/>
            <person name="Kawaji H."/>
            <person name="Kawagashira N."/>
            <person name="Kawashima T."/>
            <person name="Kojima M."/>
            <person name="Kondo S."/>
            <person name="Konno H."/>
            <person name="Nakano K."/>
            <person name="Ninomiya N."/>
            <person name="Nishio T."/>
            <person name="Okada M."/>
            <person name="Plessy C."/>
            <person name="Shibata K."/>
            <person name="Shiraki T."/>
            <person name="Suzuki S."/>
            <person name="Tagami M."/>
            <person name="Waki K."/>
            <person name="Watahiki A."/>
            <person name="Okamura-Oho Y."/>
            <person name="Suzuki H."/>
            <person name="Kawai J."/>
            <person name="Hayashizaki Y."/>
        </authorList>
    </citation>
    <scope>NUCLEOTIDE SEQUENCE [LARGE SCALE MRNA] (ISOFORMS 1 AND 2)</scope>
    <source>
        <strain>C57BL/6J</strain>
        <tissue>Embryo</tissue>
        <tissue>Placenta</tissue>
    </source>
</reference>
<reference key="2">
    <citation type="journal article" date="2009" name="PLoS Biol.">
        <title>Lineage-specific biology revealed by a finished genome assembly of the mouse.</title>
        <authorList>
            <person name="Church D.M."/>
            <person name="Goodstadt L."/>
            <person name="Hillier L.W."/>
            <person name="Zody M.C."/>
            <person name="Goldstein S."/>
            <person name="She X."/>
            <person name="Bult C.J."/>
            <person name="Agarwala R."/>
            <person name="Cherry J.L."/>
            <person name="DiCuccio M."/>
            <person name="Hlavina W."/>
            <person name="Kapustin Y."/>
            <person name="Meric P."/>
            <person name="Maglott D."/>
            <person name="Birtle Z."/>
            <person name="Marques A.C."/>
            <person name="Graves T."/>
            <person name="Zhou S."/>
            <person name="Teague B."/>
            <person name="Potamousis K."/>
            <person name="Churas C."/>
            <person name="Place M."/>
            <person name="Herschleb J."/>
            <person name="Runnheim R."/>
            <person name="Forrest D."/>
            <person name="Amos-Landgraf J."/>
            <person name="Schwartz D.C."/>
            <person name="Cheng Z."/>
            <person name="Lindblad-Toh K."/>
            <person name="Eichler E.E."/>
            <person name="Ponting C.P."/>
        </authorList>
    </citation>
    <scope>NUCLEOTIDE SEQUENCE [LARGE SCALE GENOMIC DNA]</scope>
    <source>
        <strain>C57BL/6J</strain>
    </source>
</reference>
<reference key="3">
    <citation type="journal article" date="2004" name="Genome Res.">
        <title>The status, quality, and expansion of the NIH full-length cDNA project: the Mammalian Gene Collection (MGC).</title>
        <authorList>
            <consortium name="The MGC Project Team"/>
        </authorList>
    </citation>
    <scope>NUCLEOTIDE SEQUENCE [LARGE SCALE MRNA] (ISOFORM 1)</scope>
    <source>
        <strain>FVB/N</strain>
        <tissue>Kidney</tissue>
    </source>
</reference>
<reference key="4">
    <citation type="journal article" date="2004" name="Mol. Cell. Biol.">
        <title>FF domains of CA150 bind transcription and splicing factors through multiple weak interactions.</title>
        <authorList>
            <person name="Smith M.J."/>
            <person name="Kulkarni S."/>
            <person name="Pawson T."/>
        </authorList>
    </citation>
    <scope>INTERACTION WITH TCERG1</scope>
</reference>
<reference key="5">
    <citation type="journal article" date="2004" name="Mol. Cell. Proteomics">
        <title>Phosphoproteomic analysis of the developing mouse brain.</title>
        <authorList>
            <person name="Ballif B.A."/>
            <person name="Villen J."/>
            <person name="Beausoleil S.A."/>
            <person name="Schwartz D."/>
            <person name="Gygi S.P."/>
        </authorList>
    </citation>
    <scope>PHOSPHORYLATION [LARGE SCALE ANALYSIS] AT SER-645</scope>
    <scope>IDENTIFICATION BY MASS SPECTROMETRY [LARGE SCALE ANALYSIS]</scope>
    <source>
        <tissue>Embryonic brain</tissue>
    </source>
</reference>
<reference key="6">
    <citation type="journal article" date="2007" name="Proc. Natl. Acad. Sci. U.S.A.">
        <title>Large-scale phosphorylation analysis of mouse liver.</title>
        <authorList>
            <person name="Villen J."/>
            <person name="Beausoleil S.A."/>
            <person name="Gerber S.A."/>
            <person name="Gygi S.P."/>
        </authorList>
    </citation>
    <scope>PHOSPHORYLATION [LARGE SCALE ANALYSIS] AT SER-613; SER-621; SER-705 AND SER-724</scope>
    <scope>IDENTIFICATION BY MASS SPECTROMETRY [LARGE SCALE ANALYSIS]</scope>
    <source>
        <tissue>Liver</tissue>
    </source>
</reference>
<reference key="7">
    <citation type="journal article" date="2010" name="Cell">
        <title>A tissue-specific atlas of mouse protein phosphorylation and expression.</title>
        <authorList>
            <person name="Huttlin E.L."/>
            <person name="Jedrychowski M.P."/>
            <person name="Elias J.E."/>
            <person name="Goswami T."/>
            <person name="Rad R."/>
            <person name="Beausoleil S.A."/>
            <person name="Villen J."/>
            <person name="Haas W."/>
            <person name="Sowa M.E."/>
            <person name="Gygi S.P."/>
        </authorList>
    </citation>
    <scope>PHOSPHORYLATION [LARGE SCALE ANALYSIS] AT SER-410; SER-441; SER-613; SER-621; SER-645; SER-705 AND SER-724</scope>
    <scope>IDENTIFICATION BY MASS SPECTROMETRY [LARGE SCALE ANALYSIS]</scope>
    <source>
        <tissue>Brain</tissue>
        <tissue>Brown adipose tissue</tissue>
        <tissue>Heart</tissue>
        <tissue>Kidney</tissue>
        <tissue>Liver</tissue>
        <tissue>Lung</tissue>
        <tissue>Pancreas</tissue>
        <tissue>Spleen</tissue>
        <tissue>Testis</tissue>
    </source>
</reference>
<reference key="8">
    <citation type="journal article" date="2013" name="Mol. Cell">
        <title>SIRT5-mediated lysine desuccinylation impacts diverse metabolic pathways.</title>
        <authorList>
            <person name="Park J."/>
            <person name="Chen Y."/>
            <person name="Tishkoff D.X."/>
            <person name="Peng C."/>
            <person name="Tan M."/>
            <person name="Dai L."/>
            <person name="Xie Z."/>
            <person name="Zhang Y."/>
            <person name="Zwaans B.M."/>
            <person name="Skinner M.E."/>
            <person name="Lombard D.B."/>
            <person name="Zhao Y."/>
        </authorList>
    </citation>
    <scope>ACETYLATION [LARGE SCALE ANALYSIS] AT LYS-298</scope>
    <scope>IDENTIFICATION BY MASS SPECTROMETRY [LARGE SCALE ANALYSIS]</scope>
    <source>
        <tissue>Embryonic fibroblast</tissue>
    </source>
</reference>
<comment type="function">
    <text evidence="1">Component of the 17S U2 SnRNP complex of the spliceosome, a large ribonucleoprotein complex that removes introns from transcribed pre-mRNAs. The 17S U2 SnRNP complex (1) directly participates in early spliceosome assembly and (2) mediates recognition of the intron branch site during pre-mRNA splicing by promoting the selection of the pre-mRNA branch-site adenosine, the nucleophile for the first step of splicing. Within the 17S U2 SnRNP complex, HTATSF1 is required to stabilize the branchpoint-interacting stem loop. HTATSF1 is displaced from the 17S U2 SnRNP complex before the stable addition of the 17S U2 SnRNP complex to the spliceosome, destabilizing the branchpoint-interacting stem loop and allowing to probe intron branch site sequences. Also acts as a regulator of transcriptional elongation, possibly by mediating the reciprocal stimulatory effect of splicing on transcriptional elongation. Involved in double-strand break (DSB) repair via homologous recombination in S-phase by promoting the recruitment of TOPBP1 to DNA damage sites. Mechanistically, HTATSF1 is (1) recruited to DNA damage sites in S-phase via interaction with poly-ADP-ribosylated RPA1 and (2) phosphorylated by CK2, promoting recruitment of TOPBP1, thereby facilitating RAD51 nucleofilaments formation and RPA displacement, followed by homologous recombination.</text>
</comment>
<comment type="subunit">
    <text evidence="1">Component of the 17S U2 SnRNP complex, a ribonucleoprotein complex that contains small nuclear RNA (snRNA) U2 and a number of specific proteins. Within the 17S U2 SnRNP complex, interacts (via UHM region) directly with SF3B1. Component of a complex which is at least composed of HTATSF1/Tat-SF1, the P-TEFb complex components CDK9 and CCNT1, RNA polymerase II, SUPT5H, and NCL/nucleolin. Interacts with GTF2F2/RAP30 and POLR2A. Interacts with TCERG1/CA150. Interacts with (poly-ADP-ribosylated) RPA1; promoting HTATSF1 recruitment to DNA damage sites. Interacts (when phosphorylated) with TOPBP1; promoting recruitment of TOPBP1 to DNA damage sites during S-phase.</text>
</comment>
<comment type="subcellular location">
    <subcellularLocation>
        <location evidence="1">Nucleus</location>
    </subcellularLocation>
    <subcellularLocation>
        <location evidence="1">Chromosome</location>
    </subcellularLocation>
    <text evidence="1">Recruited to DNA damage sites during S-phase following interaction with poly-ADP-ribosylated RPA1.</text>
</comment>
<comment type="alternative products">
    <event type="alternative splicing"/>
    <isoform>
        <id>Q8BGC0-1</id>
        <name>1</name>
        <sequence type="displayed"/>
    </isoform>
    <isoform>
        <id>Q8BGC0-2</id>
        <name>2</name>
        <sequence type="described" ref="VSP_020332 VSP_020333"/>
    </isoform>
</comment>
<comment type="domain">
    <text evidence="1">The RRM domains mediate interaction with U snRNPs. The RRM domains specifically bind poly-ADP-ribosylated RPA1.</text>
</comment>
<comment type="PTM">
    <text evidence="1">Phosphorylation at Ser-749 by CK2 during S-phase in response to DNA damage promotes interaction with TOPBP1 and double-strand break (DSB) repair via homologous recombination.</text>
</comment>
<comment type="similarity">
    <text evidence="5">Belongs to the HTATSF1 family.</text>
</comment>
<comment type="sequence caution" evidence="5">
    <conflict type="erroneous initiation">
        <sequence resource="EMBL-CDS" id="AAI14589"/>
    </conflict>
</comment>
<comment type="sequence caution" evidence="5">
    <conflict type="erroneous initiation">
        <sequence resource="EMBL-CDS" id="AAI14590"/>
    </conflict>
</comment>
<name>HTSF1_MOUSE</name>
<feature type="initiator methionine" description="Removed" evidence="1">
    <location>
        <position position="1"/>
    </location>
</feature>
<feature type="chain" id="PRO_0000248605" description="17S U2 SnRNP complex component HTATSF1">
    <location>
        <begin position="2"/>
        <end position="757"/>
    </location>
</feature>
<feature type="domain" description="RRM 1" evidence="2">
    <location>
        <begin position="134"/>
        <end position="219"/>
    </location>
</feature>
<feature type="domain" description="RRM 2" evidence="2">
    <location>
        <begin position="265"/>
        <end position="350"/>
    </location>
</feature>
<feature type="region of interest" description="Disordered" evidence="3">
    <location>
        <begin position="1"/>
        <end position="54"/>
    </location>
</feature>
<feature type="region of interest" description="Disordered" evidence="3">
    <location>
        <begin position="80"/>
        <end position="123"/>
    </location>
</feature>
<feature type="region of interest" description="U2AF homology motif (UHM)" evidence="1">
    <location>
        <begin position="260"/>
        <end position="354"/>
    </location>
</feature>
<feature type="region of interest" description="Mediates interaction with the P-TEFb complex" evidence="1">
    <location>
        <begin position="382"/>
        <end position="757"/>
    </location>
</feature>
<feature type="region of interest" description="Disordered" evidence="3">
    <location>
        <begin position="383"/>
        <end position="417"/>
    </location>
</feature>
<feature type="region of interest" description="Disordered" evidence="3">
    <location>
        <begin position="432"/>
        <end position="757"/>
    </location>
</feature>
<feature type="compositionally biased region" description="Polar residues" evidence="3">
    <location>
        <begin position="80"/>
        <end position="94"/>
    </location>
</feature>
<feature type="compositionally biased region" description="Basic and acidic residues" evidence="3">
    <location>
        <begin position="97"/>
        <end position="123"/>
    </location>
</feature>
<feature type="compositionally biased region" description="Polar residues" evidence="3">
    <location>
        <begin position="407"/>
        <end position="417"/>
    </location>
</feature>
<feature type="compositionally biased region" description="Basic and acidic residues" evidence="3">
    <location>
        <begin position="445"/>
        <end position="483"/>
    </location>
</feature>
<feature type="compositionally biased region" description="Basic and acidic residues" evidence="3">
    <location>
        <begin position="497"/>
        <end position="538"/>
    </location>
</feature>
<feature type="compositionally biased region" description="Acidic residues" evidence="3">
    <location>
        <begin position="539"/>
        <end position="551"/>
    </location>
</feature>
<feature type="compositionally biased region" description="Basic and acidic residues" evidence="3">
    <location>
        <begin position="552"/>
        <end position="585"/>
    </location>
</feature>
<feature type="compositionally biased region" description="Basic and acidic residues" evidence="3">
    <location>
        <begin position="595"/>
        <end position="609"/>
    </location>
</feature>
<feature type="compositionally biased region" description="Acidic residues" evidence="3">
    <location>
        <begin position="610"/>
        <end position="635"/>
    </location>
</feature>
<feature type="compositionally biased region" description="Acidic residues" evidence="3">
    <location>
        <begin position="643"/>
        <end position="671"/>
    </location>
</feature>
<feature type="compositionally biased region" description="Acidic residues" evidence="3">
    <location>
        <begin position="678"/>
        <end position="688"/>
    </location>
</feature>
<feature type="compositionally biased region" description="Basic and acidic residues" evidence="3">
    <location>
        <begin position="689"/>
        <end position="709"/>
    </location>
</feature>
<feature type="compositionally biased region" description="Basic and acidic residues" evidence="3">
    <location>
        <begin position="716"/>
        <end position="737"/>
    </location>
</feature>
<feature type="compositionally biased region" description="Low complexity" evidence="3">
    <location>
        <begin position="738"/>
        <end position="749"/>
    </location>
</feature>
<feature type="modified residue" description="N-acetylserine" evidence="1">
    <location>
        <position position="2"/>
    </location>
</feature>
<feature type="modified residue" description="N6-acetyllysine" evidence="9">
    <location>
        <position position="298"/>
    </location>
</feature>
<feature type="modified residue" description="Phosphoserine" evidence="1">
    <location>
        <position position="388"/>
    </location>
</feature>
<feature type="modified residue" description="Phosphoserine" evidence="1">
    <location>
        <position position="404"/>
    </location>
</feature>
<feature type="modified residue" description="Phosphoserine" evidence="1">
    <location>
        <position position="408"/>
    </location>
</feature>
<feature type="modified residue" description="Phosphoserine" evidence="8">
    <location>
        <position position="410"/>
    </location>
</feature>
<feature type="modified residue" description="Phosphoserine" evidence="8">
    <location>
        <position position="441"/>
    </location>
</feature>
<feature type="modified residue" description="Phosphoserine" evidence="1">
    <location>
        <position position="446"/>
    </location>
</feature>
<feature type="modified residue" description="Phosphoserine" evidence="1">
    <location>
        <position position="519"/>
    </location>
</feature>
<feature type="modified residue" description="Phosphoserine" evidence="1">
    <location>
        <position position="528"/>
    </location>
</feature>
<feature type="modified residue" description="Phosphoserine" evidence="1">
    <location>
        <position position="556"/>
    </location>
</feature>
<feature type="modified residue" description="Phosphoserine" evidence="1">
    <location>
        <position position="560"/>
    </location>
</feature>
<feature type="modified residue" description="Phosphoserine" evidence="1">
    <location>
        <position position="578"/>
    </location>
</feature>
<feature type="modified residue" description="Phosphoserine" evidence="1">
    <location>
        <position position="598"/>
    </location>
</feature>
<feature type="modified residue" description="Phosphoserine" evidence="1">
    <location>
        <position position="604"/>
    </location>
</feature>
<feature type="modified residue" description="Phosphoserine" evidence="7 8">
    <location>
        <position position="613"/>
    </location>
</feature>
<feature type="modified residue" description="Phosphoserine" evidence="7 8">
    <location>
        <position position="621"/>
    </location>
</feature>
<feature type="modified residue" description="Phosphoserine" evidence="6 8">
    <location>
        <position position="645"/>
    </location>
</feature>
<feature type="modified residue" description="Phosphoserine" evidence="1">
    <location>
        <position position="679"/>
    </location>
</feature>
<feature type="modified residue" description="Phosphoserine" evidence="7 8">
    <location>
        <position position="705"/>
    </location>
</feature>
<feature type="modified residue" description="Phosphoserine" evidence="7 8">
    <location>
        <position position="724"/>
    </location>
</feature>
<feature type="modified residue" description="Phosphoserine" evidence="1">
    <location>
        <position position="749"/>
    </location>
</feature>
<feature type="cross-link" description="Glycyl lysine isopeptide (Lys-Gly) (interchain with G-Cter in SUMO2)" evidence="1">
    <location>
        <position position="431"/>
    </location>
</feature>
<feature type="splice variant" id="VSP_020332" description="In isoform 2." evidence="4">
    <original>KESV</original>
    <variation>VFSV</variation>
    <location>
        <begin position="192"/>
        <end position="195"/>
    </location>
</feature>
<feature type="splice variant" id="VSP_020333" description="In isoform 2." evidence="4">
    <location>
        <begin position="196"/>
        <end position="757"/>
    </location>
</feature>
<sequence>MSGNNLSGNDEFDEQLRMQELYGGDPKEGDTQNEPSGEAHSLGQPPDDTPYEWDLDKKAWFPKITEDFIATYQANYGFSSDGASSSTANVQDANTKAVEEPPQKEVPETPDSKRKGEKRKAESGWFHVEEDRNTNVYVSGLPPDITVDEFIQLMSKFGIIMRDPQTEEFKVKLYKDDQGNLKGDGLCCYLKKESVELALKLLDEDEIRGYKLHVEVAKFQLKGEYDASKKKKKCKDYKKKLSLQQKQLDWRPERRAGPNRLRHERVVILKNMFHPMDFEDDPLVLNEIREDLRVECSKFGQIRKLLLFDRHPDGVASVSFREPEEADHCIQTLDGRWFGGRQITAQAWDGTTDYQVEETSREREERLRGWEAFLNAPEASRGLRRMDSIAGSERPGPSRMRHFSEHPSMSNMKAQEATTGMAFEETIDENKFEKAEEGGESEGDASEKDAKEGGSDGDHPEREGGEGCSKKENEEGCPERALEPEEGNPQTEAQENGPEREARKKSKMDYEKNGFSKESEDNDLGKESEGEDSLKKESEDDDSEEESEEDSSEKQSQDGSDKEIEENGVKKDVDQDVSDKEFPEDVEKESEENETDKSEFDEGSERVLDEEGSEREFEEDSDEKEEEGDDDEEEVVYERVFDDDSDDIEEEEEADEKECEDADDKEEDNDIDEKLFDDSDEKEDEEDTDGKKDDDASDKVFEDNSNEKLFDEEEGPNEKLFDDSDERGTVGNVKEDGSQSTDSSFALSSSDDDDDEV</sequence>
<keyword id="KW-0007">Acetylation</keyword>
<keyword id="KW-0010">Activator</keyword>
<keyword id="KW-0025">Alternative splicing</keyword>
<keyword id="KW-0158">Chromosome</keyword>
<keyword id="KW-0227">DNA damage</keyword>
<keyword id="KW-0234">DNA repair</keyword>
<keyword id="KW-1017">Isopeptide bond</keyword>
<keyword id="KW-0507">mRNA processing</keyword>
<keyword id="KW-0508">mRNA splicing</keyword>
<keyword id="KW-0539">Nucleus</keyword>
<keyword id="KW-0597">Phosphoprotein</keyword>
<keyword id="KW-1185">Reference proteome</keyword>
<keyword id="KW-0677">Repeat</keyword>
<keyword id="KW-0694">RNA-binding</keyword>
<keyword id="KW-0747">Spliceosome</keyword>
<keyword id="KW-0804">Transcription</keyword>
<keyword id="KW-0805">Transcription regulation</keyword>
<keyword id="KW-0832">Ubl conjugation</keyword>
<protein>
    <recommendedName>
        <fullName>17S U2 SnRNP complex component HTATSF1</fullName>
    </recommendedName>
    <alternativeName>
        <fullName>HIV Tat-specific factor 1 homolog</fullName>
    </alternativeName>
</protein>
<organism>
    <name type="scientific">Mus musculus</name>
    <name type="common">Mouse</name>
    <dbReference type="NCBI Taxonomy" id="10090"/>
    <lineage>
        <taxon>Eukaryota</taxon>
        <taxon>Metazoa</taxon>
        <taxon>Chordata</taxon>
        <taxon>Craniata</taxon>
        <taxon>Vertebrata</taxon>
        <taxon>Euteleostomi</taxon>
        <taxon>Mammalia</taxon>
        <taxon>Eutheria</taxon>
        <taxon>Euarchontoglires</taxon>
        <taxon>Glires</taxon>
        <taxon>Rodentia</taxon>
        <taxon>Myomorpha</taxon>
        <taxon>Muroidea</taxon>
        <taxon>Muridae</taxon>
        <taxon>Murinae</taxon>
        <taxon>Mus</taxon>
        <taxon>Mus</taxon>
    </lineage>
</organism>
<proteinExistence type="evidence at protein level"/>
<accession>Q8BGC0</accession>
<accession>B1AVC7</accession>
<accession>Q1WWK0</accession>
<accession>Q9CT41</accession>
<accession>Q9DAU3</accession>